<name>Y952_VIBVU</name>
<feature type="chain" id="PRO_0000192711" description="UPF0276 protein VV1_0952">
    <location>
        <begin position="1"/>
        <end position="291"/>
    </location>
</feature>
<accession>Q8DDM6</accession>
<reference key="1">
    <citation type="submission" date="2002-12" db="EMBL/GenBank/DDBJ databases">
        <title>Complete genome sequence of Vibrio vulnificus CMCP6.</title>
        <authorList>
            <person name="Rhee J.H."/>
            <person name="Kim S.Y."/>
            <person name="Chung S.S."/>
            <person name="Kim J.J."/>
            <person name="Moon Y.H."/>
            <person name="Jeong H."/>
            <person name="Choy H.E."/>
        </authorList>
    </citation>
    <scope>NUCLEOTIDE SEQUENCE [LARGE SCALE GENOMIC DNA]</scope>
    <source>
        <strain>CMCP6</strain>
    </source>
</reference>
<organism>
    <name type="scientific">Vibrio vulnificus (strain CMCP6)</name>
    <dbReference type="NCBI Taxonomy" id="216895"/>
    <lineage>
        <taxon>Bacteria</taxon>
        <taxon>Pseudomonadati</taxon>
        <taxon>Pseudomonadota</taxon>
        <taxon>Gammaproteobacteria</taxon>
        <taxon>Vibrionales</taxon>
        <taxon>Vibrionaceae</taxon>
        <taxon>Vibrio</taxon>
    </lineage>
</organism>
<dbReference type="EMBL" id="AE016795">
    <property type="protein sequence ID" value="AAO09446.2"/>
    <property type="molecule type" value="Genomic_DNA"/>
</dbReference>
<dbReference type="RefSeq" id="WP_011078998.1">
    <property type="nucleotide sequence ID" value="NC_004459.3"/>
</dbReference>
<dbReference type="SMR" id="Q8DDM6"/>
<dbReference type="KEGG" id="vvu:VV1_0952"/>
<dbReference type="HOGENOM" id="CLU_064263_0_0_6"/>
<dbReference type="Proteomes" id="UP000002275">
    <property type="component" value="Chromosome 1"/>
</dbReference>
<dbReference type="Gene3D" id="3.20.20.150">
    <property type="entry name" value="Divalent-metal-dependent TIM barrel enzymes"/>
    <property type="match status" value="1"/>
</dbReference>
<dbReference type="HAMAP" id="MF_00697">
    <property type="entry name" value="UPF0276"/>
    <property type="match status" value="1"/>
</dbReference>
<dbReference type="InterPro" id="IPR007801">
    <property type="entry name" value="MbnB/TglH/ChrH"/>
</dbReference>
<dbReference type="InterPro" id="IPR036237">
    <property type="entry name" value="Xyl_isomerase-like_sf"/>
</dbReference>
<dbReference type="NCBIfam" id="NF003818">
    <property type="entry name" value="PRK05409.1"/>
    <property type="match status" value="1"/>
</dbReference>
<dbReference type="PANTHER" id="PTHR42194">
    <property type="entry name" value="UPF0276 PROTEIN HI_1600"/>
    <property type="match status" value="1"/>
</dbReference>
<dbReference type="PANTHER" id="PTHR42194:SF1">
    <property type="entry name" value="UPF0276 PROTEIN HI_1600"/>
    <property type="match status" value="1"/>
</dbReference>
<dbReference type="Pfam" id="PF05114">
    <property type="entry name" value="MbnB_TglH_ChrH"/>
    <property type="match status" value="1"/>
</dbReference>
<dbReference type="SUPFAM" id="SSF51658">
    <property type="entry name" value="Xylose isomerase-like"/>
    <property type="match status" value="1"/>
</dbReference>
<gene>
    <name type="ordered locus">VV1_0952</name>
</gene>
<comment type="similarity">
    <text evidence="1">Belongs to the UPF0276 family.</text>
</comment>
<proteinExistence type="inferred from homology"/>
<evidence type="ECO:0000255" key="1">
    <source>
        <dbReference type="HAMAP-Rule" id="MF_00697"/>
    </source>
</evidence>
<protein>
    <recommendedName>
        <fullName evidence="1">UPF0276 protein VV1_0952</fullName>
    </recommendedName>
</protein>
<sequence>MSNTEFHPHIGVGLRLPHHDHFHHHRPALSWLEIHSENYFQPNSFHRQQLNQMAEHYQISCHGIGLSLGSVAGVNPQHLLRLKQLVDDLQPFLVSDHLSWSENGGHYFNDLLPLPYTEEALEVFCRNVLHVQDALKRPILIENPSSYLKYQHSTISEWQFLTEVQRRTDCRLLLDLNNVYVSAFNHGFDCQTYLEAIPAACVDEIHLAGFTIKSLEQGEIWIDTHSQPVSAEVWQLYQQWIAQHGSRHTLIEWDLDLPPVDVLLNEAKKADTLLRASLLHTNPMHPSLALG</sequence>